<protein>
    <recommendedName>
        <fullName evidence="2">Probable transcription factor At1g11510</fullName>
    </recommendedName>
    <alternativeName>
        <fullName evidence="2">Storekeeper-like protein At1g11510</fullName>
    </alternativeName>
</protein>
<dbReference type="EMBL" id="AC011661">
    <property type="protein sequence ID" value="AAF16644.1"/>
    <property type="status" value="ALT_SEQ"/>
    <property type="molecule type" value="Genomic_DNA"/>
</dbReference>
<dbReference type="EMBL" id="CP002684">
    <property type="protein sequence ID" value="AEE28746.1"/>
    <property type="molecule type" value="Genomic_DNA"/>
</dbReference>
<dbReference type="EMBL" id="AB493449">
    <property type="protein sequence ID" value="BAH30287.1"/>
    <property type="molecule type" value="Genomic_DNA"/>
</dbReference>
<dbReference type="PIR" id="E86248">
    <property type="entry name" value="E86248"/>
</dbReference>
<dbReference type="RefSeq" id="NP_172618.1">
    <property type="nucleotide sequence ID" value="NM_101024.2"/>
</dbReference>
<dbReference type="SMR" id="C0SUU6"/>
<dbReference type="IntAct" id="C0SUU6">
    <property type="interactions" value="7"/>
</dbReference>
<dbReference type="STRING" id="3702.C0SUU6"/>
<dbReference type="iPTMnet" id="C0SUU6"/>
<dbReference type="PaxDb" id="3702-AT1G11510.1"/>
<dbReference type="ProteomicsDB" id="228413"/>
<dbReference type="EnsemblPlants" id="AT1G11510.1">
    <property type="protein sequence ID" value="AT1G11510.1"/>
    <property type="gene ID" value="AT1G11510"/>
</dbReference>
<dbReference type="GeneID" id="837694"/>
<dbReference type="Gramene" id="AT1G11510.1">
    <property type="protein sequence ID" value="AT1G11510.1"/>
    <property type="gene ID" value="AT1G11510"/>
</dbReference>
<dbReference type="KEGG" id="ath:AT1G11510"/>
<dbReference type="Araport" id="AT1G11510"/>
<dbReference type="TAIR" id="AT1G11510"/>
<dbReference type="eggNOG" id="ENOG502RQE9">
    <property type="taxonomic scope" value="Eukaryota"/>
</dbReference>
<dbReference type="HOGENOM" id="CLU_051273_0_0_1"/>
<dbReference type="InParanoid" id="C0SUU6"/>
<dbReference type="OMA" id="KSVWGSE"/>
<dbReference type="PhylomeDB" id="C0SUU6"/>
<dbReference type="PRO" id="PR:C0SUU6"/>
<dbReference type="Proteomes" id="UP000006548">
    <property type="component" value="Chromosome 1"/>
</dbReference>
<dbReference type="ExpressionAtlas" id="C0SUU6">
    <property type="expression patterns" value="baseline and differential"/>
</dbReference>
<dbReference type="GO" id="GO:0006355">
    <property type="term" value="P:regulation of DNA-templated transcription"/>
    <property type="evidence" value="ECO:0000304"/>
    <property type="project" value="TAIR"/>
</dbReference>
<dbReference type="InterPro" id="IPR007592">
    <property type="entry name" value="GEBP"/>
</dbReference>
<dbReference type="InterPro" id="IPR053933">
    <property type="entry name" value="GeBP-like_C"/>
</dbReference>
<dbReference type="InterPro" id="IPR053932">
    <property type="entry name" value="GeBP-like_DBD"/>
</dbReference>
<dbReference type="PANTHER" id="PTHR31662">
    <property type="entry name" value="BNAANNG10740D PROTEIN-RELATED"/>
    <property type="match status" value="1"/>
</dbReference>
<dbReference type="PANTHER" id="PTHR31662:SF33">
    <property type="entry name" value="DNA-BINDING STOREKEEPER PROTEIN TRANSCRIPTIONAL REGULATOR-LIKE PROTEIN"/>
    <property type="match status" value="1"/>
</dbReference>
<dbReference type="Pfam" id="PF22757">
    <property type="entry name" value="GeBP-like_C"/>
    <property type="match status" value="1"/>
</dbReference>
<dbReference type="Pfam" id="PF04504">
    <property type="entry name" value="GeBP-like_DBD"/>
    <property type="match status" value="1"/>
</dbReference>
<feature type="chain" id="PRO_0000436975" description="Probable transcription factor At1g11510">
    <location>
        <begin position="1"/>
        <end position="352"/>
    </location>
</feature>
<feature type="region of interest" description="Disordered" evidence="1">
    <location>
        <begin position="1"/>
        <end position="132"/>
    </location>
</feature>
<feature type="region of interest" description="Disordered" evidence="1">
    <location>
        <begin position="239"/>
        <end position="269"/>
    </location>
</feature>
<feature type="compositionally biased region" description="Acidic residues" evidence="1">
    <location>
        <begin position="56"/>
        <end position="66"/>
    </location>
</feature>
<feature type="compositionally biased region" description="Basic and acidic residues" evidence="1">
    <location>
        <begin position="89"/>
        <end position="101"/>
    </location>
</feature>
<feature type="compositionally biased region" description="Basic and acidic residues" evidence="1">
    <location>
        <begin position="117"/>
        <end position="132"/>
    </location>
</feature>
<feature type="compositionally biased region" description="Basic and acidic residues" evidence="1">
    <location>
        <begin position="241"/>
        <end position="259"/>
    </location>
</feature>
<reference key="1">
    <citation type="journal article" date="2000" name="Nature">
        <title>Sequence and analysis of chromosome 1 of the plant Arabidopsis thaliana.</title>
        <authorList>
            <person name="Theologis A."/>
            <person name="Ecker J.R."/>
            <person name="Palm C.J."/>
            <person name="Federspiel N.A."/>
            <person name="Kaul S."/>
            <person name="White O."/>
            <person name="Alonso J."/>
            <person name="Altafi H."/>
            <person name="Araujo R."/>
            <person name="Bowman C.L."/>
            <person name="Brooks S.Y."/>
            <person name="Buehler E."/>
            <person name="Chan A."/>
            <person name="Chao Q."/>
            <person name="Chen H."/>
            <person name="Cheuk R.F."/>
            <person name="Chin C.W."/>
            <person name="Chung M.K."/>
            <person name="Conn L."/>
            <person name="Conway A.B."/>
            <person name="Conway A.R."/>
            <person name="Creasy T.H."/>
            <person name="Dewar K."/>
            <person name="Dunn P."/>
            <person name="Etgu P."/>
            <person name="Feldblyum T.V."/>
            <person name="Feng J.-D."/>
            <person name="Fong B."/>
            <person name="Fujii C.Y."/>
            <person name="Gill J.E."/>
            <person name="Goldsmith A.D."/>
            <person name="Haas B."/>
            <person name="Hansen N.F."/>
            <person name="Hughes B."/>
            <person name="Huizar L."/>
            <person name="Hunter J.L."/>
            <person name="Jenkins J."/>
            <person name="Johnson-Hopson C."/>
            <person name="Khan S."/>
            <person name="Khaykin E."/>
            <person name="Kim C.J."/>
            <person name="Koo H.L."/>
            <person name="Kremenetskaia I."/>
            <person name="Kurtz D.B."/>
            <person name="Kwan A."/>
            <person name="Lam B."/>
            <person name="Langin-Hooper S."/>
            <person name="Lee A."/>
            <person name="Lee J.M."/>
            <person name="Lenz C.A."/>
            <person name="Li J.H."/>
            <person name="Li Y.-P."/>
            <person name="Lin X."/>
            <person name="Liu S.X."/>
            <person name="Liu Z.A."/>
            <person name="Luros J.S."/>
            <person name="Maiti R."/>
            <person name="Marziali A."/>
            <person name="Militscher J."/>
            <person name="Miranda M."/>
            <person name="Nguyen M."/>
            <person name="Nierman W.C."/>
            <person name="Osborne B.I."/>
            <person name="Pai G."/>
            <person name="Peterson J."/>
            <person name="Pham P.K."/>
            <person name="Rizzo M."/>
            <person name="Rooney T."/>
            <person name="Rowley D."/>
            <person name="Sakano H."/>
            <person name="Salzberg S.L."/>
            <person name="Schwartz J.R."/>
            <person name="Shinn P."/>
            <person name="Southwick A.M."/>
            <person name="Sun H."/>
            <person name="Tallon L.J."/>
            <person name="Tambunga G."/>
            <person name="Toriumi M.J."/>
            <person name="Town C.D."/>
            <person name="Utterback T."/>
            <person name="Van Aken S."/>
            <person name="Vaysberg M."/>
            <person name="Vysotskaia V.S."/>
            <person name="Walker M."/>
            <person name="Wu D."/>
            <person name="Yu G."/>
            <person name="Fraser C.M."/>
            <person name="Venter J.C."/>
            <person name="Davis R.W."/>
        </authorList>
    </citation>
    <scope>NUCLEOTIDE SEQUENCE [LARGE SCALE GENOMIC DNA]</scope>
    <source>
        <strain>cv. Columbia</strain>
    </source>
</reference>
<reference key="2">
    <citation type="journal article" date="2017" name="Plant J.">
        <title>Araport11: a complete reannotation of the Arabidopsis thaliana reference genome.</title>
        <authorList>
            <person name="Cheng C.Y."/>
            <person name="Krishnakumar V."/>
            <person name="Chan A.P."/>
            <person name="Thibaud-Nissen F."/>
            <person name="Schobel S."/>
            <person name="Town C.D."/>
        </authorList>
    </citation>
    <scope>GENOME REANNOTATION</scope>
    <source>
        <strain>cv. Columbia</strain>
    </source>
</reference>
<reference key="3">
    <citation type="submission" date="2009-03" db="EMBL/GenBank/DDBJ databases">
        <title>ORF cloning and analysis of Arabidopsis transcription factor genes.</title>
        <authorList>
            <person name="Fujita M."/>
            <person name="Mizukado S."/>
            <person name="Seki M."/>
            <person name="Shinozaki K."/>
            <person name="Mitsuda N."/>
            <person name="Takiguchi Y."/>
            <person name="Takagi M."/>
        </authorList>
    </citation>
    <scope>NUCLEOTIDE SEQUENCE [LARGE SCALE GENOMIC DNA]</scope>
</reference>
<reference key="4">
    <citation type="journal article" date="2003" name="Plant J.">
        <title>GeBP, the first member of a new gene family in Arabidopsis, encodes a nuclear protein with DNA-binding activity and is regulated by KNAT1.</title>
        <authorList>
            <person name="Curaba J."/>
            <person name="Herzog M."/>
            <person name="Vachon G."/>
        </authorList>
    </citation>
    <scope>GENE FAMILY</scope>
</reference>
<reference key="5">
    <citation type="journal article" date="2016" name="Plant Physiol. Biochem.">
        <title>Regulation of Arabidopsis thaliana plasma membrane glucose-responsive regulator (AtPGR) expression by A. thaliana storekeeper-like transcription factor, AtSTKL, modulates glucose response in Arabidopsis.</title>
        <authorList>
            <person name="Chung M.S."/>
            <person name="Lee S."/>
            <person name="Min J.H."/>
            <person name="Huang P."/>
            <person name="Ju H.W."/>
            <person name="Kim C.S."/>
        </authorList>
    </citation>
    <scope>GENE FAMILY</scope>
</reference>
<evidence type="ECO:0000256" key="1">
    <source>
        <dbReference type="SAM" id="MobiDB-lite"/>
    </source>
</evidence>
<evidence type="ECO:0000305" key="2"/>
<evidence type="ECO:0000312" key="3">
    <source>
        <dbReference type="Araport" id="AT1G11510"/>
    </source>
</evidence>
<evidence type="ECO:0000312" key="4">
    <source>
        <dbReference type="EMBL" id="AAF16644.1"/>
    </source>
</evidence>
<evidence type="ECO:0000312" key="5">
    <source>
        <dbReference type="EMBL" id="BAH30287.1"/>
    </source>
</evidence>
<name>STKLA_ARATH</name>
<organism evidence="5">
    <name type="scientific">Arabidopsis thaliana</name>
    <name type="common">Mouse-ear cress</name>
    <dbReference type="NCBI Taxonomy" id="3702"/>
    <lineage>
        <taxon>Eukaryota</taxon>
        <taxon>Viridiplantae</taxon>
        <taxon>Streptophyta</taxon>
        <taxon>Embryophyta</taxon>
        <taxon>Tracheophyta</taxon>
        <taxon>Spermatophyta</taxon>
        <taxon>Magnoliopsida</taxon>
        <taxon>eudicotyledons</taxon>
        <taxon>Gunneridae</taxon>
        <taxon>Pentapetalae</taxon>
        <taxon>rosids</taxon>
        <taxon>malvids</taxon>
        <taxon>Brassicales</taxon>
        <taxon>Brassicaceae</taxon>
        <taxon>Camelineae</taxon>
        <taxon>Arabidopsis</taxon>
    </lineage>
</organism>
<accession>C0SUU6</accession>
<accession>Q9LPY4</accession>
<gene>
    <name evidence="3" type="ordered locus">At1g11510</name>
    <name evidence="4" type="ORF">T23J18.17</name>
</gene>
<keyword id="KW-1185">Reference proteome</keyword>
<keyword id="KW-0804">Transcription</keyword>
<keyword id="KW-0805">Transcription regulation</keyword>
<comment type="interaction">
    <interactant intactId="EBI-15191973">
        <id>C0SUU6</id>
    </interactant>
    <interactant intactId="EBI-15191747">
        <id>Q9SFV2</id>
        <label>FHA2</label>
    </interactant>
    <organismsDiffer>false</organismsDiffer>
    <experiments>3</experiments>
</comment>
<comment type="interaction">
    <interactant intactId="EBI-15191973">
        <id>C0SUU6</id>
    </interactant>
    <interactant intactId="EBI-1999467">
        <id>Q3E9B4</id>
        <label>OFP8</label>
    </interactant>
    <organismsDiffer>false</organismsDiffer>
    <experiments>4</experiments>
</comment>
<comment type="interaction">
    <interactant intactId="EBI-15191973">
        <id>C0SUU6</id>
    </interactant>
    <interactant intactId="EBI-15191543">
        <id>Q05153</id>
        <label>SSRP1</label>
    </interactant>
    <organismsDiffer>false</organismsDiffer>
    <experiments>3</experiments>
</comment>
<comment type="similarity">
    <text evidence="2">Belongs to the GeBP family.</text>
</comment>
<comment type="sequence caution" evidence="2">
    <conflict type="erroneous gene model prediction">
        <sequence resource="EMBL-CDS" id="AAF16644"/>
    </conflict>
</comment>
<comment type="online information" name="Plant Transcription Factor Database">
    <link uri="https://planttfdb.gao-lab.org/family.php?fam=GeBP#family_intro"/>
</comment>
<proteinExistence type="evidence at protein level"/>
<sequence>MSRRFNPLEDPPSASSSDEEGKEIARNSSSDDEDDVSSENPSPLKTTLDAVSDSESGSDEETDSDSELEKKKDQVVTNPVDVKRAKKVKTSEKSGAKRSLEVDEAAVSMDVKRAKKVSGEEEKKKSGGGGEETKKTYFQRLWTEDDEIVVLQGLIDDKKDTGVSNTNKVYELVKKSISFDVSKNQLMEKLRALKKKYENNLGKAKDGVEPTFVKPHDRKAFELSKLVWGGIRMALASGMKSNEKSKKSSKFESVKHELDSSLPNSKNNCEDEVMDEGEVSFTKSSLVRSIVGLGMDELTAQQGLSKLASKDMKRFYEQWKAMQAREFEFFLQKHGFLFEVLSKISEAFGSNA</sequence>